<organism>
    <name type="scientific">Arabidopsis thaliana</name>
    <name type="common">Mouse-ear cress</name>
    <dbReference type="NCBI Taxonomy" id="3702"/>
    <lineage>
        <taxon>Eukaryota</taxon>
        <taxon>Viridiplantae</taxon>
        <taxon>Streptophyta</taxon>
        <taxon>Embryophyta</taxon>
        <taxon>Tracheophyta</taxon>
        <taxon>Spermatophyta</taxon>
        <taxon>Magnoliopsida</taxon>
        <taxon>eudicotyledons</taxon>
        <taxon>Gunneridae</taxon>
        <taxon>Pentapetalae</taxon>
        <taxon>rosids</taxon>
        <taxon>malvids</taxon>
        <taxon>Brassicales</taxon>
        <taxon>Brassicaceae</taxon>
        <taxon>Camelineae</taxon>
        <taxon>Arabidopsis</taxon>
    </lineage>
</organism>
<geneLocation type="chloroplast"/>
<reference key="1">
    <citation type="journal article" date="1999" name="DNA Res.">
        <title>Complete structure of the chloroplast genome of Arabidopsis thaliana.</title>
        <authorList>
            <person name="Sato S."/>
            <person name="Nakamura Y."/>
            <person name="Kaneko T."/>
            <person name="Asamizu E."/>
            <person name="Tabata S."/>
        </authorList>
    </citation>
    <scope>NUCLEOTIDE SEQUENCE [LARGE SCALE GENOMIC DNA]</scope>
    <source>
        <strain>cv. Columbia</strain>
    </source>
</reference>
<reference key="2">
    <citation type="journal article" date="1999" name="Plant Cell Physiol.">
        <title>Identification of clp genes expressed in senescing Arabidopsis leaves.</title>
        <authorList>
            <person name="Nakabayashi K."/>
            <person name="Ito M."/>
            <person name="Kiyosue T."/>
            <person name="Shinozaki K."/>
            <person name="Watanabe A."/>
        </authorList>
    </citation>
    <scope>NUCLEOTIDE SEQUENCE [GENOMIC DNA] OF 1-38</scope>
    <source>
        <strain>cv. Columbia</strain>
    </source>
</reference>
<reference key="3">
    <citation type="journal article" date="2023" name="Plant Cell">
        <title>An updated nomenclature for plant ribosomal protein genes.</title>
        <authorList>
            <person name="Scarpin M.R."/>
            <person name="Busche M."/>
            <person name="Martinez R.E."/>
            <person name="Harper L.C."/>
            <person name="Reiser L."/>
            <person name="Szakonyi D."/>
            <person name="Merchante C."/>
            <person name="Lan T."/>
            <person name="Xiong W."/>
            <person name="Mo B."/>
            <person name="Tang G."/>
            <person name="Chen X."/>
            <person name="Bailey-Serres J."/>
            <person name="Browning K.S."/>
            <person name="Brunkard J.O."/>
        </authorList>
    </citation>
    <scope>NOMENCLATURE</scope>
</reference>
<feature type="chain" id="PRO_0000146391" description="Small ribosomal subunit protein uS12cz/uS12cy">
    <location>
        <begin position="1"/>
        <end position="123"/>
    </location>
</feature>
<protein>
    <recommendedName>
        <fullName evidence="2">Small ribosomal subunit protein uS12cz/uS12cy</fullName>
    </recommendedName>
    <alternativeName>
        <fullName>30S ribosomal protein S12, chloroplastic</fullName>
    </alternativeName>
</protein>
<evidence type="ECO:0000250" key="1"/>
<evidence type="ECO:0000303" key="2">
    <source>
    </source>
</evidence>
<evidence type="ECO:0000305" key="3"/>
<keyword id="KW-0150">Chloroplast</keyword>
<keyword id="KW-0934">Plastid</keyword>
<keyword id="KW-1185">Reference proteome</keyword>
<keyword id="KW-0687">Ribonucleoprotein</keyword>
<keyword id="KW-0689">Ribosomal protein</keyword>
<keyword id="KW-0694">RNA-binding</keyword>
<keyword id="KW-0699">rRNA-binding</keyword>
<dbReference type="EMBL" id="AP000423">
    <property type="protein sequence ID" value="BAA84409.1"/>
    <property type="molecule type" value="Genomic_DNA"/>
</dbReference>
<dbReference type="EMBL" id="AP000423">
    <property type="protein sequence ID" value="BAA84432.1"/>
    <property type="molecule type" value="Genomic_DNA"/>
</dbReference>
<dbReference type="EMBL" id="AB022325">
    <property type="protein sequence ID" value="BAA82064.1"/>
    <property type="molecule type" value="Genomic_DNA"/>
</dbReference>
<dbReference type="SMR" id="P62126"/>
<dbReference type="FunCoup" id="P62126">
    <property type="interactions" value="2157"/>
</dbReference>
<dbReference type="STRING" id="3702.P62126"/>
<dbReference type="PaxDb" id="3702-ATCG00065.1"/>
<dbReference type="ProteomicsDB" id="226808"/>
<dbReference type="KEGG" id="ath:ArthCp001"/>
<dbReference type="KEGG" id="ath:ArthCp047"/>
<dbReference type="Araport" id="ATCG00065"/>
<dbReference type="Araport" id="ATCG00905"/>
<dbReference type="Araport" id="ATCG01230"/>
<dbReference type="TAIR" id="ATCG00065">
    <property type="gene designation" value="RPS12A"/>
</dbReference>
<dbReference type="eggNOG" id="KOG1750">
    <property type="taxonomic scope" value="Eukaryota"/>
</dbReference>
<dbReference type="HOGENOM" id="CLU_104295_5_2_1"/>
<dbReference type="InParanoid" id="P62126"/>
<dbReference type="PRO" id="PR:P62126"/>
<dbReference type="Proteomes" id="UP000006548">
    <property type="component" value="Chloroplast Pltd"/>
</dbReference>
<dbReference type="GO" id="GO:0009570">
    <property type="term" value="C:chloroplast stroma"/>
    <property type="evidence" value="ECO:0007005"/>
    <property type="project" value="TAIR"/>
</dbReference>
<dbReference type="GO" id="GO:0009534">
    <property type="term" value="C:chloroplast thylakoid"/>
    <property type="evidence" value="ECO:0007005"/>
    <property type="project" value="TAIR"/>
</dbReference>
<dbReference type="GO" id="GO:0009536">
    <property type="term" value="C:plastid"/>
    <property type="evidence" value="ECO:0007005"/>
    <property type="project" value="TAIR"/>
</dbReference>
<dbReference type="GO" id="GO:0005840">
    <property type="term" value="C:ribosome"/>
    <property type="evidence" value="ECO:0000318"/>
    <property type="project" value="GO_Central"/>
</dbReference>
<dbReference type="GO" id="GO:0015935">
    <property type="term" value="C:small ribosomal subunit"/>
    <property type="evidence" value="ECO:0007669"/>
    <property type="project" value="InterPro"/>
</dbReference>
<dbReference type="GO" id="GO:0003729">
    <property type="term" value="F:mRNA binding"/>
    <property type="evidence" value="ECO:0000314"/>
    <property type="project" value="TAIR"/>
</dbReference>
<dbReference type="GO" id="GO:0019843">
    <property type="term" value="F:rRNA binding"/>
    <property type="evidence" value="ECO:0007669"/>
    <property type="project" value="UniProtKB-UniRule"/>
</dbReference>
<dbReference type="GO" id="GO:0003735">
    <property type="term" value="F:structural constituent of ribosome"/>
    <property type="evidence" value="ECO:0000318"/>
    <property type="project" value="GO_Central"/>
</dbReference>
<dbReference type="GO" id="GO:0006412">
    <property type="term" value="P:translation"/>
    <property type="evidence" value="ECO:0000318"/>
    <property type="project" value="GO_Central"/>
</dbReference>
<dbReference type="CDD" id="cd03368">
    <property type="entry name" value="Ribosomal_S12"/>
    <property type="match status" value="1"/>
</dbReference>
<dbReference type="FunFam" id="2.40.50.140:FF:000008">
    <property type="entry name" value="30S ribosomal protein S12, chloroplastic"/>
    <property type="match status" value="1"/>
</dbReference>
<dbReference type="Gene3D" id="2.40.50.140">
    <property type="entry name" value="Nucleic acid-binding proteins"/>
    <property type="match status" value="1"/>
</dbReference>
<dbReference type="HAMAP" id="MF_00403_B">
    <property type="entry name" value="Ribosomal_uS12_B"/>
    <property type="match status" value="1"/>
</dbReference>
<dbReference type="InterPro" id="IPR012340">
    <property type="entry name" value="NA-bd_OB-fold"/>
</dbReference>
<dbReference type="InterPro" id="IPR006032">
    <property type="entry name" value="Ribosomal_uS12"/>
</dbReference>
<dbReference type="InterPro" id="IPR005679">
    <property type="entry name" value="Ribosomal_uS12_bac"/>
</dbReference>
<dbReference type="NCBIfam" id="TIGR00981">
    <property type="entry name" value="rpsL_bact"/>
    <property type="match status" value="1"/>
</dbReference>
<dbReference type="PANTHER" id="PTHR11652">
    <property type="entry name" value="30S RIBOSOMAL PROTEIN S12 FAMILY MEMBER"/>
    <property type="match status" value="1"/>
</dbReference>
<dbReference type="Pfam" id="PF00164">
    <property type="entry name" value="Ribosom_S12_S23"/>
    <property type="match status" value="1"/>
</dbReference>
<dbReference type="PIRSF" id="PIRSF002133">
    <property type="entry name" value="Ribosomal_S12/S23"/>
    <property type="match status" value="1"/>
</dbReference>
<dbReference type="PRINTS" id="PR01034">
    <property type="entry name" value="RIBOSOMALS12"/>
</dbReference>
<dbReference type="SUPFAM" id="SSF50249">
    <property type="entry name" value="Nucleic acid-binding proteins"/>
    <property type="match status" value="1"/>
</dbReference>
<dbReference type="PROSITE" id="PS00055">
    <property type="entry name" value="RIBOSOMAL_S12"/>
    <property type="match status" value="1"/>
</dbReference>
<accession>P62126</accession>
<accession>P06369</accession>
<accession>P28806</accession>
<accession>P56803</accession>
<accession>Q9XQZ8</accession>
<comment type="function">
    <text evidence="1">With S4 and S5 plays an important role in translational accuracy. Located at the interface of the 30S and 50S subunits (By similarity).</text>
</comment>
<comment type="subunit">
    <text>Part of the 30S ribosomal subunit.</text>
</comment>
<comment type="subcellular location">
    <subcellularLocation>
        <location>Plastid</location>
        <location>Chloroplast</location>
    </subcellularLocation>
</comment>
<comment type="tissue specificity">
    <text>Expressed in all plant tissues.</text>
</comment>
<comment type="miscellaneous">
    <text>Exons 2 and 3 are cis-spliced, while a trans-splicing reaction is required to link exons 1 and 2.</text>
</comment>
<comment type="similarity">
    <text evidence="3">Belongs to the universal ribosomal protein uS12 family.</text>
</comment>
<gene>
    <name type="primary">rps12-A</name>
    <name type="synonym">rps12A/rps12B</name>
    <name type="ordered locus">AtCg00065/AtCg01230</name>
</gene>
<gene>
    <name type="primary">rps12-B</name>
    <name type="synonym">rps12A/rps12C</name>
    <name type="ordered locus">AtCg00065/AtCg00905</name>
</gene>
<proteinExistence type="evidence at transcript level"/>
<sequence length="123" mass="13764">MPTIKQLIRNTRQPIRNVTKSPALRGCPQRRGTCTRVYTITPKKPNSALRKVARVRLTSGFEITAYIPGIGHNLQEHSVVLVRGGRVKDLPGVRYHIVRGTLDAVGVKDRQQGRSKYGVKKPK</sequence>
<name>RR12_ARATH</name>